<keyword id="KW-0067">ATP-binding</keyword>
<keyword id="KW-0963">Cytoplasm</keyword>
<keyword id="KW-0235">DNA replication</keyword>
<keyword id="KW-0238">DNA-binding</keyword>
<keyword id="KW-0446">Lipid-binding</keyword>
<keyword id="KW-0547">Nucleotide-binding</keyword>
<dbReference type="EMBL" id="FM200053">
    <property type="protein sequence ID" value="CAR61712.1"/>
    <property type="molecule type" value="Genomic_DNA"/>
</dbReference>
<dbReference type="RefSeq" id="WP_000059093.1">
    <property type="nucleotide sequence ID" value="NC_011147.1"/>
</dbReference>
<dbReference type="SMR" id="B5BIL4"/>
<dbReference type="KEGG" id="sek:SSPA3437"/>
<dbReference type="HOGENOM" id="CLU_026910_0_1_6"/>
<dbReference type="Proteomes" id="UP000001869">
    <property type="component" value="Chromosome"/>
</dbReference>
<dbReference type="GO" id="GO:0005737">
    <property type="term" value="C:cytoplasm"/>
    <property type="evidence" value="ECO:0007669"/>
    <property type="project" value="UniProtKB-SubCell"/>
</dbReference>
<dbReference type="GO" id="GO:0005886">
    <property type="term" value="C:plasma membrane"/>
    <property type="evidence" value="ECO:0007669"/>
    <property type="project" value="TreeGrafter"/>
</dbReference>
<dbReference type="GO" id="GO:0005524">
    <property type="term" value="F:ATP binding"/>
    <property type="evidence" value="ECO:0007669"/>
    <property type="project" value="UniProtKB-UniRule"/>
</dbReference>
<dbReference type="GO" id="GO:0016887">
    <property type="term" value="F:ATP hydrolysis activity"/>
    <property type="evidence" value="ECO:0007669"/>
    <property type="project" value="InterPro"/>
</dbReference>
<dbReference type="GO" id="GO:0003688">
    <property type="term" value="F:DNA replication origin binding"/>
    <property type="evidence" value="ECO:0007669"/>
    <property type="project" value="UniProtKB-UniRule"/>
</dbReference>
<dbReference type="GO" id="GO:0008289">
    <property type="term" value="F:lipid binding"/>
    <property type="evidence" value="ECO:0007669"/>
    <property type="project" value="UniProtKB-KW"/>
</dbReference>
<dbReference type="GO" id="GO:0006270">
    <property type="term" value="P:DNA replication initiation"/>
    <property type="evidence" value="ECO:0007669"/>
    <property type="project" value="UniProtKB-UniRule"/>
</dbReference>
<dbReference type="GO" id="GO:0006275">
    <property type="term" value="P:regulation of DNA replication"/>
    <property type="evidence" value="ECO:0007669"/>
    <property type="project" value="UniProtKB-UniRule"/>
</dbReference>
<dbReference type="CDD" id="cd00009">
    <property type="entry name" value="AAA"/>
    <property type="match status" value="1"/>
</dbReference>
<dbReference type="CDD" id="cd06571">
    <property type="entry name" value="Bac_DnaA_C"/>
    <property type="match status" value="1"/>
</dbReference>
<dbReference type="FunFam" id="1.10.1750.10:FF:000001">
    <property type="entry name" value="Chromosomal replication initiator protein DnaA"/>
    <property type="match status" value="1"/>
</dbReference>
<dbReference type="FunFam" id="1.10.8.60:FF:000003">
    <property type="entry name" value="Chromosomal replication initiator protein DnaA"/>
    <property type="match status" value="1"/>
</dbReference>
<dbReference type="FunFam" id="3.30.300.180:FF:000001">
    <property type="entry name" value="Chromosomal replication initiator protein DnaA"/>
    <property type="match status" value="1"/>
</dbReference>
<dbReference type="FunFam" id="3.40.50.300:FF:000103">
    <property type="entry name" value="Chromosomal replication initiator protein DnaA"/>
    <property type="match status" value="1"/>
</dbReference>
<dbReference type="Gene3D" id="1.10.1750.10">
    <property type="match status" value="1"/>
</dbReference>
<dbReference type="Gene3D" id="1.10.8.60">
    <property type="match status" value="1"/>
</dbReference>
<dbReference type="Gene3D" id="3.30.300.180">
    <property type="match status" value="1"/>
</dbReference>
<dbReference type="Gene3D" id="3.40.50.300">
    <property type="entry name" value="P-loop containing nucleotide triphosphate hydrolases"/>
    <property type="match status" value="1"/>
</dbReference>
<dbReference type="HAMAP" id="MF_00377">
    <property type="entry name" value="DnaA_bact"/>
    <property type="match status" value="1"/>
</dbReference>
<dbReference type="InterPro" id="IPR003593">
    <property type="entry name" value="AAA+_ATPase"/>
</dbReference>
<dbReference type="InterPro" id="IPR001957">
    <property type="entry name" value="Chromosome_initiator_DnaA"/>
</dbReference>
<dbReference type="InterPro" id="IPR020591">
    <property type="entry name" value="Chromosome_initiator_DnaA-like"/>
</dbReference>
<dbReference type="InterPro" id="IPR018312">
    <property type="entry name" value="Chromosome_initiator_DnaA_CS"/>
</dbReference>
<dbReference type="InterPro" id="IPR013159">
    <property type="entry name" value="DnaA_C"/>
</dbReference>
<dbReference type="InterPro" id="IPR013317">
    <property type="entry name" value="DnaA_dom"/>
</dbReference>
<dbReference type="InterPro" id="IPR024633">
    <property type="entry name" value="DnaA_N_dom"/>
</dbReference>
<dbReference type="InterPro" id="IPR038454">
    <property type="entry name" value="DnaA_N_sf"/>
</dbReference>
<dbReference type="InterPro" id="IPR027417">
    <property type="entry name" value="P-loop_NTPase"/>
</dbReference>
<dbReference type="InterPro" id="IPR010921">
    <property type="entry name" value="Trp_repressor/repl_initiator"/>
</dbReference>
<dbReference type="NCBIfam" id="TIGR00362">
    <property type="entry name" value="DnaA"/>
    <property type="match status" value="1"/>
</dbReference>
<dbReference type="PANTHER" id="PTHR30050">
    <property type="entry name" value="CHROMOSOMAL REPLICATION INITIATOR PROTEIN DNAA"/>
    <property type="match status" value="1"/>
</dbReference>
<dbReference type="PANTHER" id="PTHR30050:SF2">
    <property type="entry name" value="CHROMOSOMAL REPLICATION INITIATOR PROTEIN DNAA"/>
    <property type="match status" value="1"/>
</dbReference>
<dbReference type="Pfam" id="PF00308">
    <property type="entry name" value="Bac_DnaA"/>
    <property type="match status" value="1"/>
</dbReference>
<dbReference type="Pfam" id="PF08299">
    <property type="entry name" value="Bac_DnaA_C"/>
    <property type="match status" value="1"/>
</dbReference>
<dbReference type="Pfam" id="PF11638">
    <property type="entry name" value="DnaA_N"/>
    <property type="match status" value="1"/>
</dbReference>
<dbReference type="PRINTS" id="PR00051">
    <property type="entry name" value="DNAA"/>
</dbReference>
<dbReference type="SMART" id="SM00382">
    <property type="entry name" value="AAA"/>
    <property type="match status" value="1"/>
</dbReference>
<dbReference type="SMART" id="SM00760">
    <property type="entry name" value="Bac_DnaA_C"/>
    <property type="match status" value="1"/>
</dbReference>
<dbReference type="SUPFAM" id="SSF52540">
    <property type="entry name" value="P-loop containing nucleoside triphosphate hydrolases"/>
    <property type="match status" value="1"/>
</dbReference>
<dbReference type="SUPFAM" id="SSF48295">
    <property type="entry name" value="TrpR-like"/>
    <property type="match status" value="1"/>
</dbReference>
<dbReference type="PROSITE" id="PS01008">
    <property type="entry name" value="DNAA"/>
    <property type="match status" value="1"/>
</dbReference>
<gene>
    <name evidence="1" type="primary">dnaA</name>
    <name type="ordered locus">SSPA3437</name>
</gene>
<accession>B5BIL4</accession>
<feature type="chain" id="PRO_1000122014" description="Chromosomal replication initiator protein DnaA">
    <location>
        <begin position="1"/>
        <end position="466"/>
    </location>
</feature>
<feature type="region of interest" description="Domain I, interacts with DnaA modulators" evidence="1">
    <location>
        <begin position="1"/>
        <end position="86"/>
    </location>
</feature>
<feature type="region of interest" description="Domain II" evidence="1">
    <location>
        <begin position="86"/>
        <end position="129"/>
    </location>
</feature>
<feature type="region of interest" description="Domain III, AAA+ region" evidence="1">
    <location>
        <begin position="130"/>
        <end position="346"/>
    </location>
</feature>
<feature type="region of interest" description="Domain IV, binds dsDNA" evidence="1">
    <location>
        <begin position="347"/>
        <end position="466"/>
    </location>
</feature>
<feature type="binding site" evidence="1">
    <location>
        <position position="174"/>
    </location>
    <ligand>
        <name>ATP</name>
        <dbReference type="ChEBI" id="CHEBI:30616"/>
    </ligand>
</feature>
<feature type="binding site" evidence="1">
    <location>
        <position position="176"/>
    </location>
    <ligand>
        <name>ATP</name>
        <dbReference type="ChEBI" id="CHEBI:30616"/>
    </ligand>
</feature>
<feature type="binding site" evidence="1">
    <location>
        <position position="177"/>
    </location>
    <ligand>
        <name>ATP</name>
        <dbReference type="ChEBI" id="CHEBI:30616"/>
    </ligand>
</feature>
<feature type="binding site" evidence="1">
    <location>
        <position position="178"/>
    </location>
    <ligand>
        <name>ATP</name>
        <dbReference type="ChEBI" id="CHEBI:30616"/>
    </ligand>
</feature>
<name>DNAA_SALPK</name>
<protein>
    <recommendedName>
        <fullName evidence="1">Chromosomal replication initiator protein DnaA</fullName>
    </recommendedName>
</protein>
<comment type="function">
    <text evidence="1">Plays an essential role in the initiation and regulation of chromosomal replication. ATP-DnaA binds to the origin of replication (oriC) to initiate formation of the DNA replication initiation complex once per cell cycle. Binds the DnaA box (a 9 base pair repeat at the origin) and separates the double-stranded (ds)DNA. Forms a right-handed helical filament on oriC DNA; dsDNA binds to the exterior of the filament while single-stranded (ss)DNA is stabiized in the filament's interior. The ATP-DnaA-oriC complex binds and stabilizes one strand of the AT-rich DNA unwinding element (DUE), permitting loading of DNA polymerase. After initiation quickly degrades to an ADP-DnaA complex that is not apt for DNA replication. Binds acidic phospholipids.</text>
</comment>
<comment type="subunit">
    <text evidence="1">Oligomerizes as a right-handed, spiral filament on DNA at oriC.</text>
</comment>
<comment type="subcellular location">
    <subcellularLocation>
        <location evidence="1">Cytoplasm</location>
    </subcellularLocation>
</comment>
<comment type="domain">
    <text evidence="1">Domain I is involved in oligomerization and binding regulators, domain II is flexibile and of varying length in different bacteria, domain III forms the AAA+ region, while domain IV binds dsDNA.</text>
</comment>
<comment type="similarity">
    <text evidence="1">Belongs to the DnaA family.</text>
</comment>
<evidence type="ECO:0000255" key="1">
    <source>
        <dbReference type="HAMAP-Rule" id="MF_00377"/>
    </source>
</evidence>
<reference key="1">
    <citation type="journal article" date="2009" name="BMC Genomics">
        <title>Pseudogene accumulation in the evolutionary histories of Salmonella enterica serovars Paratyphi A and Typhi.</title>
        <authorList>
            <person name="Holt K.E."/>
            <person name="Thomson N.R."/>
            <person name="Wain J."/>
            <person name="Langridge G.C."/>
            <person name="Hasan R."/>
            <person name="Bhutta Z.A."/>
            <person name="Quail M.A."/>
            <person name="Norbertczak H."/>
            <person name="Walker D."/>
            <person name="Simmonds M."/>
            <person name="White B."/>
            <person name="Bason N."/>
            <person name="Mungall K."/>
            <person name="Dougan G."/>
            <person name="Parkhill J."/>
        </authorList>
    </citation>
    <scope>NUCLEOTIDE SEQUENCE [LARGE SCALE GENOMIC DNA]</scope>
    <source>
        <strain>AKU_12601</strain>
    </source>
</reference>
<proteinExistence type="inferred from homology"/>
<sequence>MSLSLWQQCLARLQDELPATEFSMWIRPLQAELSDNTLALYAPNRFVLDWVRDKYLNNINGLLNTFCGADAPQLRFEVGTKPVTQTLKTPVHNVVAPAQTTTAQPQRVAPAARSGWDNVPAPAEPTYRSNVNVKHTFDNFVEGKSNQLARAAARQVADNPGGAYNPLFLYGGTGLGKTHLLHAVGNGIMARKPNAKVVYMHSERFVQDMVKALQNNAIEEFKRYYRSVDALLIDDIQFFANKERSQEEFFHTFNALLEGNQQIILTSDRYPKEINGVEDRLKSRFGWGLTVAIEPPELETRVAILMKKADENDIRLPGEVAFFIAKRLRSNVRELEGALNRVIANANFTGRAITIDFVREALRDLLALQEKLVTIDNIQKTVAEYYKIKIADLLSKRRSRSVARPRQMAMALAKELTNHSLPEIGDAFGGRDHTTVLHACRKIEQLREESHDIKEDFSNLIRTLSS</sequence>
<organism>
    <name type="scientific">Salmonella paratyphi A (strain AKU_12601)</name>
    <dbReference type="NCBI Taxonomy" id="554290"/>
    <lineage>
        <taxon>Bacteria</taxon>
        <taxon>Pseudomonadati</taxon>
        <taxon>Pseudomonadota</taxon>
        <taxon>Gammaproteobacteria</taxon>
        <taxon>Enterobacterales</taxon>
        <taxon>Enterobacteriaceae</taxon>
        <taxon>Salmonella</taxon>
    </lineage>
</organism>